<gene>
    <name evidence="1" type="primary">proS</name>
    <name type="ordered locus">TM_0514</name>
</gene>
<dbReference type="EC" id="6.1.1.15" evidence="1"/>
<dbReference type="EMBL" id="AE000512">
    <property type="protein sequence ID" value="AAD35599.1"/>
    <property type="molecule type" value="Genomic_DNA"/>
</dbReference>
<dbReference type="PIR" id="H72368">
    <property type="entry name" value="H72368"/>
</dbReference>
<dbReference type="RefSeq" id="NP_228324.1">
    <property type="nucleotide sequence ID" value="NC_000853.1"/>
</dbReference>
<dbReference type="RefSeq" id="WP_004081418.1">
    <property type="nucleotide sequence ID" value="NC_000853.1"/>
</dbReference>
<dbReference type="SMR" id="Q9WYY4"/>
<dbReference type="FunCoup" id="Q9WYY4">
    <property type="interactions" value="280"/>
</dbReference>
<dbReference type="STRING" id="243274.TM_0514"/>
<dbReference type="PaxDb" id="243274-THEMA_02105"/>
<dbReference type="EnsemblBacteria" id="AAD35599">
    <property type="protein sequence ID" value="AAD35599"/>
    <property type="gene ID" value="TM_0514"/>
</dbReference>
<dbReference type="KEGG" id="tma:TM0514"/>
<dbReference type="KEGG" id="tmi:THEMA_02105"/>
<dbReference type="KEGG" id="tmm:Tmari_0510"/>
<dbReference type="KEGG" id="tmw:THMA_0526"/>
<dbReference type="eggNOG" id="COG0442">
    <property type="taxonomic scope" value="Bacteria"/>
</dbReference>
<dbReference type="InParanoid" id="Q9WYY4"/>
<dbReference type="OrthoDB" id="9809052at2"/>
<dbReference type="Proteomes" id="UP000008183">
    <property type="component" value="Chromosome"/>
</dbReference>
<dbReference type="GO" id="GO:0005829">
    <property type="term" value="C:cytosol"/>
    <property type="evidence" value="ECO:0000318"/>
    <property type="project" value="GO_Central"/>
</dbReference>
<dbReference type="GO" id="GO:0002161">
    <property type="term" value="F:aminoacyl-tRNA deacylase activity"/>
    <property type="evidence" value="ECO:0007669"/>
    <property type="project" value="InterPro"/>
</dbReference>
<dbReference type="GO" id="GO:0005524">
    <property type="term" value="F:ATP binding"/>
    <property type="evidence" value="ECO:0007669"/>
    <property type="project" value="UniProtKB-UniRule"/>
</dbReference>
<dbReference type="GO" id="GO:0004827">
    <property type="term" value="F:proline-tRNA ligase activity"/>
    <property type="evidence" value="ECO:0000318"/>
    <property type="project" value="GO_Central"/>
</dbReference>
<dbReference type="GO" id="GO:0006433">
    <property type="term" value="P:prolyl-tRNA aminoacylation"/>
    <property type="evidence" value="ECO:0000318"/>
    <property type="project" value="GO_Central"/>
</dbReference>
<dbReference type="CDD" id="cd04334">
    <property type="entry name" value="ProRS-INS"/>
    <property type="match status" value="1"/>
</dbReference>
<dbReference type="CDD" id="cd00861">
    <property type="entry name" value="ProRS_anticodon_short"/>
    <property type="match status" value="1"/>
</dbReference>
<dbReference type="CDD" id="cd00779">
    <property type="entry name" value="ProRS_core_prok"/>
    <property type="match status" value="1"/>
</dbReference>
<dbReference type="FunFam" id="3.30.930.10:FF:000088">
    <property type="entry name" value="Proline--tRNA ligase"/>
    <property type="match status" value="1"/>
</dbReference>
<dbReference type="FunFam" id="3.30.930.10:FF:000167">
    <property type="entry name" value="Proline--tRNA ligase"/>
    <property type="match status" value="1"/>
</dbReference>
<dbReference type="Gene3D" id="3.40.50.800">
    <property type="entry name" value="Anticodon-binding domain"/>
    <property type="match status" value="1"/>
</dbReference>
<dbReference type="Gene3D" id="3.30.930.10">
    <property type="entry name" value="Bira Bifunctional Protein, Domain 2"/>
    <property type="match status" value="2"/>
</dbReference>
<dbReference type="HAMAP" id="MF_01569">
    <property type="entry name" value="Pro_tRNA_synth_type1"/>
    <property type="match status" value="1"/>
</dbReference>
<dbReference type="InterPro" id="IPR002314">
    <property type="entry name" value="aa-tRNA-synt_IIb"/>
</dbReference>
<dbReference type="InterPro" id="IPR006195">
    <property type="entry name" value="aa-tRNA-synth_II"/>
</dbReference>
<dbReference type="InterPro" id="IPR045864">
    <property type="entry name" value="aa-tRNA-synth_II/BPL/LPL"/>
</dbReference>
<dbReference type="InterPro" id="IPR004154">
    <property type="entry name" value="Anticodon-bd"/>
</dbReference>
<dbReference type="InterPro" id="IPR036621">
    <property type="entry name" value="Anticodon-bd_dom_sf"/>
</dbReference>
<dbReference type="InterPro" id="IPR002316">
    <property type="entry name" value="Pro-tRNA-ligase_IIa"/>
</dbReference>
<dbReference type="InterPro" id="IPR004500">
    <property type="entry name" value="Pro-tRNA-synth_IIa_bac-type"/>
</dbReference>
<dbReference type="InterPro" id="IPR023717">
    <property type="entry name" value="Pro-tRNA-Synthase_IIa_type1"/>
</dbReference>
<dbReference type="InterPro" id="IPR050062">
    <property type="entry name" value="Pro-tRNA_synthetase"/>
</dbReference>
<dbReference type="InterPro" id="IPR044140">
    <property type="entry name" value="ProRS_anticodon_short"/>
</dbReference>
<dbReference type="InterPro" id="IPR033730">
    <property type="entry name" value="ProRS_core_prok"/>
</dbReference>
<dbReference type="InterPro" id="IPR036754">
    <property type="entry name" value="YbaK/aa-tRNA-synt-asso_dom_sf"/>
</dbReference>
<dbReference type="InterPro" id="IPR007214">
    <property type="entry name" value="YbaK/aa-tRNA-synth-assoc-dom"/>
</dbReference>
<dbReference type="NCBIfam" id="NF006625">
    <property type="entry name" value="PRK09194.1"/>
    <property type="match status" value="1"/>
</dbReference>
<dbReference type="NCBIfam" id="TIGR00409">
    <property type="entry name" value="proS_fam_II"/>
    <property type="match status" value="1"/>
</dbReference>
<dbReference type="PANTHER" id="PTHR42753">
    <property type="entry name" value="MITOCHONDRIAL RIBOSOME PROTEIN L39/PROLYL-TRNA LIGASE FAMILY MEMBER"/>
    <property type="match status" value="1"/>
</dbReference>
<dbReference type="PANTHER" id="PTHR42753:SF2">
    <property type="entry name" value="PROLINE--TRNA LIGASE"/>
    <property type="match status" value="1"/>
</dbReference>
<dbReference type="Pfam" id="PF03129">
    <property type="entry name" value="HGTP_anticodon"/>
    <property type="match status" value="1"/>
</dbReference>
<dbReference type="Pfam" id="PF00587">
    <property type="entry name" value="tRNA-synt_2b"/>
    <property type="match status" value="1"/>
</dbReference>
<dbReference type="Pfam" id="PF04073">
    <property type="entry name" value="tRNA_edit"/>
    <property type="match status" value="1"/>
</dbReference>
<dbReference type="PRINTS" id="PR01046">
    <property type="entry name" value="TRNASYNTHPRO"/>
</dbReference>
<dbReference type="SUPFAM" id="SSF52954">
    <property type="entry name" value="Class II aaRS ABD-related"/>
    <property type="match status" value="1"/>
</dbReference>
<dbReference type="SUPFAM" id="SSF55681">
    <property type="entry name" value="Class II aaRS and biotin synthetases"/>
    <property type="match status" value="1"/>
</dbReference>
<dbReference type="SUPFAM" id="SSF55826">
    <property type="entry name" value="YbaK/ProRS associated domain"/>
    <property type="match status" value="1"/>
</dbReference>
<dbReference type="PROSITE" id="PS50862">
    <property type="entry name" value="AA_TRNA_LIGASE_II"/>
    <property type="match status" value="1"/>
</dbReference>
<name>SYP_THEMA</name>
<evidence type="ECO:0000255" key="1">
    <source>
        <dbReference type="HAMAP-Rule" id="MF_01569"/>
    </source>
</evidence>
<sequence length="577" mass="65947">MRMKDLYAPTLKETPSDVETVSHEYLLRGGFIRKVAAGIYTYLPLGRRVLLKIENIVREEMNRIGAQEILMPILQPAELWKQSGRWDDYGPEMMKLKDRHERDFTLGPTHEEIVTDLVKNELRSYKQLPLTLYQIANKYRDEIRPRFGLLRAREFIMKDAYSFHASWESLDETYEQFKKAYSRIMERLGVRYMIIEAETGAIGGNASHEFVVPAKIGETNVLFCEKCGYQASDEKAEYKGEYTQEQEEEKPLKKVPTPGVKTIEEVSEFLGVPPSKIVKSLLYKGREGYVMVLIRGDLELNEAKLKAHLKDQSLRMATPEEILKDFGVPVGFIGPIGVDVKKVADHSVRGLKNFVVGGMEEDTHYVNANHPRDFKVDEWYDLRTVVEGDPCPVCGEPLKATKGIELGHIFKLGTKYSEAMKAYFMDENGEMKPFIMGCYGWGVSRTMAAVVEHFHDENGMIWPLSIAPYTVVVDILNMNDAEQKQVGEKIYQVLSEKGEEVVLDDREVSPGFKFKDADLIGFPIRINVGRSLKEGVVELKKRYSKELVKVNIKNGFGALLETLEKMKREYDPKEAVR</sequence>
<reference key="1">
    <citation type="journal article" date="1999" name="Nature">
        <title>Evidence for lateral gene transfer between Archaea and Bacteria from genome sequence of Thermotoga maritima.</title>
        <authorList>
            <person name="Nelson K.E."/>
            <person name="Clayton R.A."/>
            <person name="Gill S.R."/>
            <person name="Gwinn M.L."/>
            <person name="Dodson R.J."/>
            <person name="Haft D.H."/>
            <person name="Hickey E.K."/>
            <person name="Peterson J.D."/>
            <person name="Nelson W.C."/>
            <person name="Ketchum K.A."/>
            <person name="McDonald L.A."/>
            <person name="Utterback T.R."/>
            <person name="Malek J.A."/>
            <person name="Linher K.D."/>
            <person name="Garrett M.M."/>
            <person name="Stewart A.M."/>
            <person name="Cotton M.D."/>
            <person name="Pratt M.S."/>
            <person name="Phillips C.A."/>
            <person name="Richardson D.L."/>
            <person name="Heidelberg J.F."/>
            <person name="Sutton G.G."/>
            <person name="Fleischmann R.D."/>
            <person name="Eisen J.A."/>
            <person name="White O."/>
            <person name="Salzberg S.L."/>
            <person name="Smith H.O."/>
            <person name="Venter J.C."/>
            <person name="Fraser C.M."/>
        </authorList>
    </citation>
    <scope>NUCLEOTIDE SEQUENCE [LARGE SCALE GENOMIC DNA]</scope>
    <source>
        <strain>ATCC 43589 / DSM 3109 / JCM 10099 / NBRC 100826 / MSB8</strain>
    </source>
</reference>
<protein>
    <recommendedName>
        <fullName evidence="1">Proline--tRNA ligase</fullName>
        <ecNumber evidence="1">6.1.1.15</ecNumber>
    </recommendedName>
    <alternativeName>
        <fullName evidence="1">Prolyl-tRNA synthetase</fullName>
        <shortName evidence="1">ProRS</shortName>
    </alternativeName>
</protein>
<keyword id="KW-0030">Aminoacyl-tRNA synthetase</keyword>
<keyword id="KW-0067">ATP-binding</keyword>
<keyword id="KW-0963">Cytoplasm</keyword>
<keyword id="KW-0436">Ligase</keyword>
<keyword id="KW-0547">Nucleotide-binding</keyword>
<keyword id="KW-0648">Protein biosynthesis</keyword>
<keyword id="KW-1185">Reference proteome</keyword>
<accession>Q9WYY4</accession>
<proteinExistence type="inferred from homology"/>
<organism>
    <name type="scientific">Thermotoga maritima (strain ATCC 43589 / DSM 3109 / JCM 10099 / NBRC 100826 / MSB8)</name>
    <dbReference type="NCBI Taxonomy" id="243274"/>
    <lineage>
        <taxon>Bacteria</taxon>
        <taxon>Thermotogati</taxon>
        <taxon>Thermotogota</taxon>
        <taxon>Thermotogae</taxon>
        <taxon>Thermotogales</taxon>
        <taxon>Thermotogaceae</taxon>
        <taxon>Thermotoga</taxon>
    </lineage>
</organism>
<comment type="function">
    <text evidence="1">Catalyzes the attachment of proline to tRNA(Pro) in a two-step reaction: proline is first activated by ATP to form Pro-AMP and then transferred to the acceptor end of tRNA(Pro). As ProRS can inadvertently accommodate and process non-cognate amino acids such as alanine and cysteine, to avoid such errors it has two additional distinct editing activities against alanine. One activity is designated as 'pretransfer' editing and involves the tRNA(Pro)-independent hydrolysis of activated Ala-AMP. The other activity is designated 'posttransfer' editing and involves deacylation of mischarged Ala-tRNA(Pro). The misacylated Cys-tRNA(Pro) is not edited by ProRS.</text>
</comment>
<comment type="catalytic activity">
    <reaction evidence="1">
        <text>tRNA(Pro) + L-proline + ATP = L-prolyl-tRNA(Pro) + AMP + diphosphate</text>
        <dbReference type="Rhea" id="RHEA:14305"/>
        <dbReference type="Rhea" id="RHEA-COMP:9700"/>
        <dbReference type="Rhea" id="RHEA-COMP:9702"/>
        <dbReference type="ChEBI" id="CHEBI:30616"/>
        <dbReference type="ChEBI" id="CHEBI:33019"/>
        <dbReference type="ChEBI" id="CHEBI:60039"/>
        <dbReference type="ChEBI" id="CHEBI:78442"/>
        <dbReference type="ChEBI" id="CHEBI:78532"/>
        <dbReference type="ChEBI" id="CHEBI:456215"/>
        <dbReference type="EC" id="6.1.1.15"/>
    </reaction>
</comment>
<comment type="subunit">
    <text evidence="1">Homodimer.</text>
</comment>
<comment type="subcellular location">
    <subcellularLocation>
        <location evidence="1">Cytoplasm</location>
    </subcellularLocation>
</comment>
<comment type="domain">
    <text evidence="1">Consists of three domains: the N-terminal catalytic domain, the editing domain and the C-terminal anticodon-binding domain.</text>
</comment>
<comment type="similarity">
    <text evidence="1">Belongs to the class-II aminoacyl-tRNA synthetase family. ProS type 1 subfamily.</text>
</comment>
<feature type="chain" id="PRO_0000248802" description="Proline--tRNA ligase">
    <location>
        <begin position="1"/>
        <end position="577"/>
    </location>
</feature>